<feature type="transit peptide" description="Mitochondrion" evidence="3">
    <location>
        <begin position="1"/>
        <end position="23"/>
    </location>
</feature>
<feature type="chain" id="PRO_0000000901" description="Enoyl-[acyl-carrier-protein] reductase 2, mitochondrial">
    <location>
        <begin position="24"/>
        <end position="387"/>
    </location>
</feature>
<feature type="active site" description="Proton donor" evidence="2">
    <location>
        <position position="79"/>
    </location>
</feature>
<feature type="binding site" evidence="2">
    <location>
        <position position="172"/>
    </location>
    <ligand>
        <name>NADP(+)</name>
        <dbReference type="ChEBI" id="CHEBI:58349"/>
    </ligand>
</feature>
<feature type="binding site" evidence="2">
    <location>
        <begin position="199"/>
        <end position="202"/>
    </location>
    <ligand>
        <name>NADP(+)</name>
        <dbReference type="ChEBI" id="CHEBI:58349"/>
    </ligand>
</feature>
<feature type="binding site" evidence="2">
    <location>
        <begin position="222"/>
        <end position="224"/>
    </location>
    <ligand>
        <name>NADP(+)</name>
        <dbReference type="ChEBI" id="CHEBI:58349"/>
    </ligand>
</feature>
<feature type="binding site" evidence="2">
    <location>
        <begin position="297"/>
        <end position="300"/>
    </location>
    <ligand>
        <name>NADP(+)</name>
        <dbReference type="ChEBI" id="CHEBI:58349"/>
    </ligand>
</feature>
<feature type="binding site" evidence="2">
    <location>
        <begin position="322"/>
        <end position="324"/>
    </location>
    <ligand>
        <name>NADP(+)</name>
        <dbReference type="ChEBI" id="CHEBI:58349"/>
    </ligand>
</feature>
<feature type="binding site" evidence="2">
    <location>
        <position position="382"/>
    </location>
    <ligand>
        <name>NADP(+)</name>
        <dbReference type="ChEBI" id="CHEBI:58349"/>
    </ligand>
</feature>
<proteinExistence type="inferred from homology"/>
<sequence>MYRNQLARASLRSTSSINQIRNMITAQAVVYAQHGEPKDVLKTLKYEIDDDNLDSNSIIVKTLGSPVNPSDINQIQGVYPSKPEKTTELGSNEPVAVCGNEGLFEILKVGDNVSNFKVGDWCVPTSVNMGTWRTHMLCGGDEMTKIPNPEQSKANGKPSGLSVNQGATISVNPLTAYLMLTHYVKLTPGKDWFIQNGGNSAVGKYATQISNLLGINSISVIRDRPDLQDLIKNMTEECGATKVITEEQNASKEFGSEIKSWVKETGGEIKLALNCVGGKNSTGIARKLNNNGLMLTYGGMSMQPVILPTSLHIFKNITSSGFWVTQLLKNDVELKRKTLGQIIEWYENRQLKDAPSKETKFNPSDELSRYYIDGIVNSKGGKQLIVY</sequence>
<accession>Q6BV30</accession>
<organism>
    <name type="scientific">Debaryomyces hansenii (strain ATCC 36239 / CBS 767 / BCRC 21394 / JCM 1990 / NBRC 0083 / IGC 2968)</name>
    <name type="common">Yeast</name>
    <name type="synonym">Torulaspora hansenii</name>
    <dbReference type="NCBI Taxonomy" id="284592"/>
    <lineage>
        <taxon>Eukaryota</taxon>
        <taxon>Fungi</taxon>
        <taxon>Dikarya</taxon>
        <taxon>Ascomycota</taxon>
        <taxon>Saccharomycotina</taxon>
        <taxon>Pichiomycetes</taxon>
        <taxon>Debaryomycetaceae</taxon>
        <taxon>Debaryomyces</taxon>
    </lineage>
</organism>
<dbReference type="EC" id="1.3.1.104"/>
<dbReference type="EMBL" id="CR382135">
    <property type="protein sequence ID" value="CAG85995.1"/>
    <property type="molecule type" value="Genomic_DNA"/>
</dbReference>
<dbReference type="RefSeq" id="XP_457939.1">
    <property type="nucleotide sequence ID" value="XM_457939.1"/>
</dbReference>
<dbReference type="SMR" id="Q6BV30"/>
<dbReference type="FunCoup" id="Q6BV30">
    <property type="interactions" value="741"/>
</dbReference>
<dbReference type="STRING" id="284592.Q6BV30"/>
<dbReference type="GeneID" id="2900740"/>
<dbReference type="KEGG" id="dha:DEHA2C05808g"/>
<dbReference type="VEuPathDB" id="FungiDB:DEHA2C05808g"/>
<dbReference type="eggNOG" id="KOG0025">
    <property type="taxonomic scope" value="Eukaryota"/>
</dbReference>
<dbReference type="HOGENOM" id="CLU_026673_17_0_1"/>
<dbReference type="InParanoid" id="Q6BV30"/>
<dbReference type="OMA" id="YGYTQSK"/>
<dbReference type="OrthoDB" id="7482721at2759"/>
<dbReference type="Proteomes" id="UP000000599">
    <property type="component" value="Chromosome C"/>
</dbReference>
<dbReference type="GO" id="GO:0005759">
    <property type="term" value="C:mitochondrial matrix"/>
    <property type="evidence" value="ECO:0007669"/>
    <property type="project" value="UniProtKB-SubCell"/>
</dbReference>
<dbReference type="GO" id="GO:0141148">
    <property type="term" value="F:enoyl-[acyl-carrier-protein] reductase (NADPH) activity"/>
    <property type="evidence" value="ECO:0007669"/>
    <property type="project" value="UniProtKB-EC"/>
</dbReference>
<dbReference type="GO" id="GO:0006633">
    <property type="term" value="P:fatty acid biosynthetic process"/>
    <property type="evidence" value="ECO:0007669"/>
    <property type="project" value="UniProtKB-KW"/>
</dbReference>
<dbReference type="CDD" id="cd08290">
    <property type="entry name" value="ETR"/>
    <property type="match status" value="1"/>
</dbReference>
<dbReference type="FunFam" id="3.40.50.720:FF:000112">
    <property type="entry name" value="Enoyl-[acyl-carrier-protein] reductase 1, mitochondrial"/>
    <property type="match status" value="1"/>
</dbReference>
<dbReference type="Gene3D" id="3.90.180.10">
    <property type="entry name" value="Medium-chain alcohol dehydrogenases, catalytic domain"/>
    <property type="match status" value="1"/>
</dbReference>
<dbReference type="Gene3D" id="3.40.50.720">
    <property type="entry name" value="NAD(P)-binding Rossmann-like Domain"/>
    <property type="match status" value="1"/>
</dbReference>
<dbReference type="InterPro" id="IPR013149">
    <property type="entry name" value="ADH-like_C"/>
</dbReference>
<dbReference type="InterPro" id="IPR013154">
    <property type="entry name" value="ADH-like_N"/>
</dbReference>
<dbReference type="InterPro" id="IPR011032">
    <property type="entry name" value="GroES-like_sf"/>
</dbReference>
<dbReference type="InterPro" id="IPR051034">
    <property type="entry name" value="Mito_Enoyl-ACP_Reductase"/>
</dbReference>
<dbReference type="InterPro" id="IPR036291">
    <property type="entry name" value="NAD(P)-bd_dom_sf"/>
</dbReference>
<dbReference type="InterPro" id="IPR020843">
    <property type="entry name" value="PKS_ER"/>
</dbReference>
<dbReference type="PANTHER" id="PTHR43981">
    <property type="entry name" value="ENOYL-[ACYL-CARRIER-PROTEIN] REDUCTASE, MITOCHONDRIAL"/>
    <property type="match status" value="1"/>
</dbReference>
<dbReference type="PANTHER" id="PTHR43981:SF2">
    <property type="entry name" value="ENOYL-[ACYL-CARRIER-PROTEIN] REDUCTASE, MITOCHONDRIAL"/>
    <property type="match status" value="1"/>
</dbReference>
<dbReference type="Pfam" id="PF08240">
    <property type="entry name" value="ADH_N"/>
    <property type="match status" value="1"/>
</dbReference>
<dbReference type="Pfam" id="PF00107">
    <property type="entry name" value="ADH_zinc_N"/>
    <property type="match status" value="1"/>
</dbReference>
<dbReference type="SMART" id="SM00829">
    <property type="entry name" value="PKS_ER"/>
    <property type="match status" value="1"/>
</dbReference>
<dbReference type="SUPFAM" id="SSF50129">
    <property type="entry name" value="GroES-like"/>
    <property type="match status" value="1"/>
</dbReference>
<dbReference type="SUPFAM" id="SSF51735">
    <property type="entry name" value="NAD(P)-binding Rossmann-fold domains"/>
    <property type="match status" value="1"/>
</dbReference>
<keyword id="KW-0275">Fatty acid biosynthesis</keyword>
<keyword id="KW-0276">Fatty acid metabolism</keyword>
<keyword id="KW-0444">Lipid biosynthesis</keyword>
<keyword id="KW-0443">Lipid metabolism</keyword>
<keyword id="KW-0496">Mitochondrion</keyword>
<keyword id="KW-0521">NADP</keyword>
<keyword id="KW-0560">Oxidoreductase</keyword>
<keyword id="KW-1185">Reference proteome</keyword>
<keyword id="KW-0809">Transit peptide</keyword>
<protein>
    <recommendedName>
        <fullName>Enoyl-[acyl-carrier-protein] reductase 2, mitochondrial</fullName>
        <ecNumber>1.3.1.104</ecNumber>
    </recommendedName>
    <alternativeName>
        <fullName>2-enoyl thioester reductase 2</fullName>
    </alternativeName>
</protein>
<reference key="1">
    <citation type="journal article" date="2004" name="Nature">
        <title>Genome evolution in yeasts.</title>
        <authorList>
            <person name="Dujon B."/>
            <person name="Sherman D."/>
            <person name="Fischer G."/>
            <person name="Durrens P."/>
            <person name="Casaregola S."/>
            <person name="Lafontaine I."/>
            <person name="de Montigny J."/>
            <person name="Marck C."/>
            <person name="Neuveglise C."/>
            <person name="Talla E."/>
            <person name="Goffard N."/>
            <person name="Frangeul L."/>
            <person name="Aigle M."/>
            <person name="Anthouard V."/>
            <person name="Babour A."/>
            <person name="Barbe V."/>
            <person name="Barnay S."/>
            <person name="Blanchin S."/>
            <person name="Beckerich J.-M."/>
            <person name="Beyne E."/>
            <person name="Bleykasten C."/>
            <person name="Boisrame A."/>
            <person name="Boyer J."/>
            <person name="Cattolico L."/>
            <person name="Confanioleri F."/>
            <person name="de Daruvar A."/>
            <person name="Despons L."/>
            <person name="Fabre E."/>
            <person name="Fairhead C."/>
            <person name="Ferry-Dumazet H."/>
            <person name="Groppi A."/>
            <person name="Hantraye F."/>
            <person name="Hennequin C."/>
            <person name="Jauniaux N."/>
            <person name="Joyet P."/>
            <person name="Kachouri R."/>
            <person name="Kerrest A."/>
            <person name="Koszul R."/>
            <person name="Lemaire M."/>
            <person name="Lesur I."/>
            <person name="Ma L."/>
            <person name="Muller H."/>
            <person name="Nicaud J.-M."/>
            <person name="Nikolski M."/>
            <person name="Oztas S."/>
            <person name="Ozier-Kalogeropoulos O."/>
            <person name="Pellenz S."/>
            <person name="Potier S."/>
            <person name="Richard G.-F."/>
            <person name="Straub M.-L."/>
            <person name="Suleau A."/>
            <person name="Swennen D."/>
            <person name="Tekaia F."/>
            <person name="Wesolowski-Louvel M."/>
            <person name="Westhof E."/>
            <person name="Wirth B."/>
            <person name="Zeniou-Meyer M."/>
            <person name="Zivanovic Y."/>
            <person name="Bolotin-Fukuhara M."/>
            <person name="Thierry A."/>
            <person name="Bouchier C."/>
            <person name="Caudron B."/>
            <person name="Scarpelli C."/>
            <person name="Gaillardin C."/>
            <person name="Weissenbach J."/>
            <person name="Wincker P."/>
            <person name="Souciet J.-L."/>
        </authorList>
    </citation>
    <scope>NUCLEOTIDE SEQUENCE [LARGE SCALE GENOMIC DNA]</scope>
    <source>
        <strain>ATCC 36239 / CBS 767 / BCRC 21394 / JCM 1990 / NBRC 0083 / IGC 2968</strain>
    </source>
</reference>
<gene>
    <name type="primary">ETR2</name>
    <name type="ordered locus">DEHA2C05808g</name>
</gene>
<name>ETR2_DEBHA</name>
<evidence type="ECO:0000250" key="1">
    <source>
        <dbReference type="UniProtKB" id="P38071"/>
    </source>
</evidence>
<evidence type="ECO:0000250" key="2">
    <source>
        <dbReference type="UniProtKB" id="Q8WZM3"/>
    </source>
</evidence>
<evidence type="ECO:0000255" key="3"/>
<evidence type="ECO:0000305" key="4"/>
<comment type="function">
    <text evidence="1">Catalyzes the NADPH-dependent reduction of trans-2-enoyl thioesters in mitochondrial fatty acid synthesis (fatty acid synthesis type II). Fatty acid chain elongation in mitochondria uses acyl carrier protein (ACP) as an acyl group carrier, but the enzyme accepts both ACP and CoA thioesters as substrates in vitro. Required for respiration and the maintenance of the mitochondrial compartment.</text>
</comment>
<comment type="catalytic activity">
    <reaction evidence="1">
        <text>a 2,3-saturated acyl-[ACP] + NADP(+) = a (2E)-enoyl-[ACP] + NADPH + H(+)</text>
        <dbReference type="Rhea" id="RHEA:22564"/>
        <dbReference type="Rhea" id="RHEA-COMP:9925"/>
        <dbReference type="Rhea" id="RHEA-COMP:9926"/>
        <dbReference type="ChEBI" id="CHEBI:15378"/>
        <dbReference type="ChEBI" id="CHEBI:57783"/>
        <dbReference type="ChEBI" id="CHEBI:58349"/>
        <dbReference type="ChEBI" id="CHEBI:78784"/>
        <dbReference type="ChEBI" id="CHEBI:78785"/>
        <dbReference type="EC" id="1.3.1.104"/>
    </reaction>
</comment>
<comment type="subunit">
    <text evidence="2">Homodimer.</text>
</comment>
<comment type="subcellular location">
    <subcellularLocation>
        <location evidence="1">Mitochondrion matrix</location>
    </subcellularLocation>
</comment>
<comment type="similarity">
    <text evidence="4">Belongs to the zinc-containing alcohol dehydrogenase family. Quinone oxidoreductase subfamily.</text>
</comment>